<protein>
    <recommendedName>
        <fullName>Rano class II histocompatibility antigen, B alpha chain</fullName>
    </recommendedName>
    <alternativeName>
        <fullName>RT1 class II antigen, Ba chain</fullName>
    </alternativeName>
</protein>
<proteinExistence type="inferred from homology"/>
<name>HA2B_RAT</name>
<gene>
    <name type="primary">RT1-Ba</name>
</gene>
<comment type="subcellular location">
    <subcellularLocation>
        <location evidence="3">Membrane</location>
        <topology evidence="3">Single-pass type I membrane protein</topology>
    </subcellularLocation>
</comment>
<comment type="similarity">
    <text evidence="3">Belongs to the MHC class II family.</text>
</comment>
<evidence type="ECO:0000255" key="1"/>
<evidence type="ECO:0000255" key="2">
    <source>
        <dbReference type="PROSITE-ProRule" id="PRU00114"/>
    </source>
</evidence>
<evidence type="ECO:0000305" key="3"/>
<reference key="1">
    <citation type="journal article" date="1987" name="Immunogenetics">
        <title>DNA sequence analysis of the rat RT1.B alpha gene.</title>
        <authorList>
            <person name="Barran P.A."/>
            <person name="McMaster W.R."/>
        </authorList>
    </citation>
    <scope>NUCLEOTIDE SEQUENCE [GENOMIC DNA]</scope>
</reference>
<organism>
    <name type="scientific">Rattus norvegicus</name>
    <name type="common">Rat</name>
    <dbReference type="NCBI Taxonomy" id="10116"/>
    <lineage>
        <taxon>Eukaryota</taxon>
        <taxon>Metazoa</taxon>
        <taxon>Chordata</taxon>
        <taxon>Craniata</taxon>
        <taxon>Vertebrata</taxon>
        <taxon>Euteleostomi</taxon>
        <taxon>Mammalia</taxon>
        <taxon>Eutheria</taxon>
        <taxon>Euarchontoglires</taxon>
        <taxon>Glires</taxon>
        <taxon>Rodentia</taxon>
        <taxon>Myomorpha</taxon>
        <taxon>Muroidea</taxon>
        <taxon>Muridae</taxon>
        <taxon>Murinae</taxon>
        <taxon>Rattus</taxon>
    </lineage>
</organism>
<feature type="signal peptide">
    <location>
        <begin position="1"/>
        <end position="23"/>
    </location>
</feature>
<feature type="chain" id="PRO_0000018983" description="Rano class II histocompatibility antigen, B alpha chain">
    <location>
        <begin position="24"/>
        <end position="256"/>
    </location>
</feature>
<feature type="topological domain" description="Extracellular" evidence="1">
    <location>
        <begin position="24"/>
        <end position="218"/>
    </location>
</feature>
<feature type="transmembrane region" description="Helical" evidence="1">
    <location>
        <begin position="219"/>
        <end position="244"/>
    </location>
</feature>
<feature type="topological domain" description="Cytoplasmic" evidence="1">
    <location>
        <begin position="245"/>
        <end position="256"/>
    </location>
</feature>
<feature type="domain" description="Ig-like C1-type">
    <location>
        <begin position="108"/>
        <end position="206"/>
    </location>
</feature>
<feature type="region of interest" description="Alpha-1">
    <location>
        <begin position="24"/>
        <end position="111"/>
    </location>
</feature>
<feature type="region of interest" description="Alpha-2">
    <location>
        <begin position="112"/>
        <end position="205"/>
    </location>
</feature>
<feature type="region of interest" description="Connecting peptide">
    <location>
        <begin position="206"/>
        <end position="218"/>
    </location>
</feature>
<feature type="glycosylation site" description="N-linked (GlcNAc...) asparagine" evidence="1">
    <location>
        <position position="145"/>
    </location>
</feature>
<feature type="disulfide bond" evidence="2">
    <location>
        <begin position="134"/>
        <end position="190"/>
    </location>
</feature>
<keyword id="KW-1064">Adaptive immunity</keyword>
<keyword id="KW-1015">Disulfide bond</keyword>
<keyword id="KW-0325">Glycoprotein</keyword>
<keyword id="KW-0391">Immunity</keyword>
<keyword id="KW-0472">Membrane</keyword>
<keyword id="KW-0491">MHC II</keyword>
<keyword id="KW-1185">Reference proteome</keyword>
<keyword id="KW-0732">Signal</keyword>
<keyword id="KW-0812">Transmembrane</keyword>
<keyword id="KW-1133">Transmembrane helix</keyword>
<accession>P20037</accession>
<dbReference type="EMBL" id="M22366">
    <property type="protein sequence ID" value="AAA42083.1"/>
    <property type="molecule type" value="Genomic_DNA"/>
</dbReference>
<dbReference type="EMBL" id="M31014">
    <property type="protein sequence ID" value="AAA42083.1"/>
    <property type="status" value="JOINED"/>
    <property type="molecule type" value="Genomic_DNA"/>
</dbReference>
<dbReference type="PIR" id="S02855">
    <property type="entry name" value="S02855"/>
</dbReference>
<dbReference type="SMR" id="P20037"/>
<dbReference type="FunCoup" id="P20037">
    <property type="interactions" value="48"/>
</dbReference>
<dbReference type="STRING" id="10116.ENSRNOP00000000523"/>
<dbReference type="GlyCosmos" id="P20037">
    <property type="glycosylation" value="1 site, No reported glycans"/>
</dbReference>
<dbReference type="GlyGen" id="P20037">
    <property type="glycosylation" value="1 site"/>
</dbReference>
<dbReference type="UCSC" id="RGD:1595867">
    <property type="organism name" value="rat"/>
</dbReference>
<dbReference type="AGR" id="RGD:1595867"/>
<dbReference type="RGD" id="1595867">
    <property type="gene designation" value="RT1-Ba"/>
</dbReference>
<dbReference type="InParanoid" id="P20037"/>
<dbReference type="PhylomeDB" id="P20037"/>
<dbReference type="Reactome" id="R-RNO-202424">
    <property type="pathway name" value="Downstream TCR signaling"/>
</dbReference>
<dbReference type="Reactome" id="R-RNO-202427">
    <property type="pathway name" value="Phosphorylation of CD3 and TCR zeta chains"/>
</dbReference>
<dbReference type="Reactome" id="R-RNO-202430">
    <property type="pathway name" value="Translocation of ZAP-70 to Immunological synapse"/>
</dbReference>
<dbReference type="Reactome" id="R-RNO-202433">
    <property type="pathway name" value="Generation of second messenger molecules"/>
</dbReference>
<dbReference type="Reactome" id="R-RNO-2132295">
    <property type="pathway name" value="MHC class II antigen presentation"/>
</dbReference>
<dbReference type="Reactome" id="R-RNO-389948">
    <property type="pathway name" value="Co-inhibition by PD-1"/>
</dbReference>
<dbReference type="PRO" id="PR:P20037"/>
<dbReference type="Proteomes" id="UP000002494">
    <property type="component" value="Unplaced"/>
</dbReference>
<dbReference type="GO" id="GO:0009897">
    <property type="term" value="C:external side of plasma membrane"/>
    <property type="evidence" value="ECO:0000266"/>
    <property type="project" value="RGD"/>
</dbReference>
<dbReference type="GO" id="GO:0031902">
    <property type="term" value="C:late endosome membrane"/>
    <property type="evidence" value="ECO:0000318"/>
    <property type="project" value="GO_Central"/>
</dbReference>
<dbReference type="GO" id="GO:0005765">
    <property type="term" value="C:lysosomal membrane"/>
    <property type="evidence" value="ECO:0000318"/>
    <property type="project" value="GO_Central"/>
</dbReference>
<dbReference type="GO" id="GO:0005764">
    <property type="term" value="C:lysosome"/>
    <property type="evidence" value="ECO:0000266"/>
    <property type="project" value="RGD"/>
</dbReference>
<dbReference type="GO" id="GO:0042613">
    <property type="term" value="C:MHC class II protein complex"/>
    <property type="evidence" value="ECO:0000266"/>
    <property type="project" value="RGD"/>
</dbReference>
<dbReference type="GO" id="GO:0005886">
    <property type="term" value="C:plasma membrane"/>
    <property type="evidence" value="ECO:0000266"/>
    <property type="project" value="RGD"/>
</dbReference>
<dbReference type="GO" id="GO:0023026">
    <property type="term" value="F:MHC class II protein complex binding"/>
    <property type="evidence" value="ECO:0000318"/>
    <property type="project" value="GO_Central"/>
</dbReference>
<dbReference type="GO" id="GO:0042605">
    <property type="term" value="F:peptide antigen binding"/>
    <property type="evidence" value="ECO:0000266"/>
    <property type="project" value="RGD"/>
</dbReference>
<dbReference type="GO" id="GO:0044877">
    <property type="term" value="F:protein-containing complex binding"/>
    <property type="evidence" value="ECO:0000314"/>
    <property type="project" value="RGD"/>
</dbReference>
<dbReference type="GO" id="GO:0002250">
    <property type="term" value="P:adaptive immune response"/>
    <property type="evidence" value="ECO:0007669"/>
    <property type="project" value="UniProtKB-KW"/>
</dbReference>
<dbReference type="GO" id="GO:0019882">
    <property type="term" value="P:antigen processing and presentation"/>
    <property type="evidence" value="ECO:0000266"/>
    <property type="project" value="RGD"/>
</dbReference>
<dbReference type="GO" id="GO:0019886">
    <property type="term" value="P:antigen processing and presentation of exogenous peptide antigen via MHC class II"/>
    <property type="evidence" value="ECO:0000266"/>
    <property type="project" value="RGD"/>
</dbReference>
<dbReference type="GO" id="GO:0048002">
    <property type="term" value="P:antigen processing and presentation of peptide antigen"/>
    <property type="evidence" value="ECO:0000266"/>
    <property type="project" value="RGD"/>
</dbReference>
<dbReference type="GO" id="GO:0071385">
    <property type="term" value="P:cellular response to glucocorticoid stimulus"/>
    <property type="evidence" value="ECO:0000270"/>
    <property type="project" value="RGD"/>
</dbReference>
<dbReference type="GO" id="GO:0042130">
    <property type="term" value="P:negative regulation of T cell proliferation"/>
    <property type="evidence" value="ECO:0000314"/>
    <property type="project" value="RGD"/>
</dbReference>
<dbReference type="GO" id="GO:0002503">
    <property type="term" value="P:peptide antigen assembly with MHC class II protein complex"/>
    <property type="evidence" value="ECO:0000318"/>
    <property type="project" value="GO_Central"/>
</dbReference>
<dbReference type="GO" id="GO:0050778">
    <property type="term" value="P:positive regulation of immune response"/>
    <property type="evidence" value="ECO:0000318"/>
    <property type="project" value="GO_Central"/>
</dbReference>
<dbReference type="GO" id="GO:0050870">
    <property type="term" value="P:positive regulation of T cell activation"/>
    <property type="evidence" value="ECO:0000318"/>
    <property type="project" value="GO_Central"/>
</dbReference>
<dbReference type="GO" id="GO:0045582">
    <property type="term" value="P:positive regulation of T cell differentiation"/>
    <property type="evidence" value="ECO:0000266"/>
    <property type="project" value="RGD"/>
</dbReference>
<dbReference type="CDD" id="cd05767">
    <property type="entry name" value="IgC1_MHC_II_alpha"/>
    <property type="match status" value="1"/>
</dbReference>
<dbReference type="FunFam" id="2.60.40.10:FF:000280">
    <property type="entry name" value="HLA class II histocompatibility antigen, DR alpha chain"/>
    <property type="match status" value="1"/>
</dbReference>
<dbReference type="FunFam" id="3.10.320.10:FF:000002">
    <property type="entry name" value="HLA class II histocompatibility antigen, DR alpha chain"/>
    <property type="match status" value="1"/>
</dbReference>
<dbReference type="Gene3D" id="3.10.320.10">
    <property type="entry name" value="Class II Histocompatibility Antigen, M Beta Chain, Chain B, domain 1"/>
    <property type="match status" value="1"/>
</dbReference>
<dbReference type="Gene3D" id="2.60.40.10">
    <property type="entry name" value="Immunoglobulins"/>
    <property type="match status" value="1"/>
</dbReference>
<dbReference type="InterPro" id="IPR007110">
    <property type="entry name" value="Ig-like_dom"/>
</dbReference>
<dbReference type="InterPro" id="IPR036179">
    <property type="entry name" value="Ig-like_dom_sf"/>
</dbReference>
<dbReference type="InterPro" id="IPR013783">
    <property type="entry name" value="Ig-like_fold"/>
</dbReference>
<dbReference type="InterPro" id="IPR003006">
    <property type="entry name" value="Ig/MHC_CS"/>
</dbReference>
<dbReference type="InterPro" id="IPR003597">
    <property type="entry name" value="Ig_C1-set"/>
</dbReference>
<dbReference type="InterPro" id="IPR050160">
    <property type="entry name" value="MHC/Immunoglobulin"/>
</dbReference>
<dbReference type="InterPro" id="IPR011162">
    <property type="entry name" value="MHC_I/II-like_Ag-recog"/>
</dbReference>
<dbReference type="InterPro" id="IPR014745">
    <property type="entry name" value="MHC_II_a/b_N"/>
</dbReference>
<dbReference type="InterPro" id="IPR001003">
    <property type="entry name" value="MHC_II_a_N"/>
</dbReference>
<dbReference type="PANTHER" id="PTHR19944:SF59">
    <property type="entry name" value="HLA CLASS II HISTOCOMPATIBILITY ANTIGEN, DQ ALPHA 1 CHAIN"/>
    <property type="match status" value="1"/>
</dbReference>
<dbReference type="PANTHER" id="PTHR19944">
    <property type="entry name" value="MHC CLASS II-RELATED"/>
    <property type="match status" value="1"/>
</dbReference>
<dbReference type="Pfam" id="PF07654">
    <property type="entry name" value="C1-set"/>
    <property type="match status" value="1"/>
</dbReference>
<dbReference type="Pfam" id="PF00993">
    <property type="entry name" value="MHC_II_alpha"/>
    <property type="match status" value="1"/>
</dbReference>
<dbReference type="SMART" id="SM00407">
    <property type="entry name" value="IGc1"/>
    <property type="match status" value="1"/>
</dbReference>
<dbReference type="SMART" id="SM00920">
    <property type="entry name" value="MHC_II_alpha"/>
    <property type="match status" value="1"/>
</dbReference>
<dbReference type="SUPFAM" id="SSF48726">
    <property type="entry name" value="Immunoglobulin"/>
    <property type="match status" value="1"/>
</dbReference>
<dbReference type="SUPFAM" id="SSF54452">
    <property type="entry name" value="MHC antigen-recognition domain"/>
    <property type="match status" value="1"/>
</dbReference>
<dbReference type="PROSITE" id="PS50835">
    <property type="entry name" value="IG_LIKE"/>
    <property type="match status" value="1"/>
</dbReference>
<dbReference type="PROSITE" id="PS00290">
    <property type="entry name" value="IG_MHC"/>
    <property type="match status" value="1"/>
</dbReference>
<sequence length="256" mass="28602">MPLSRALILGVLALTTMLSPCGGQDDIEADHVGSYGITVYQYHESKGQYTHEFDGDERFYVDLDKKETIWRIPEFGQLISFDPQGALRNIAIIKHNLEILMKRSNSTPAVNEVPEATVFSKSPVLLGQPNTLICFVDNIFPPVINITWLRNSKPLTEGVYETSFLINSDYSFHKMAYLTFIPSNDDIYDCKVEHWSLDEPVLRHWEPEIPAPMSELTETVVCALGLSVGLVGIVVGTIFIIQGLRSVAPSRHPGPL</sequence>